<dbReference type="EMBL" id="CP001055">
    <property type="protein sequence ID" value="ACC97905.1"/>
    <property type="molecule type" value="Genomic_DNA"/>
</dbReference>
<dbReference type="RefSeq" id="WP_012414520.1">
    <property type="nucleotide sequence ID" value="NC_010644.1"/>
</dbReference>
<dbReference type="SMR" id="B2KB83"/>
<dbReference type="STRING" id="445932.Emin_0346"/>
<dbReference type="KEGG" id="emi:Emin_0346"/>
<dbReference type="HOGENOM" id="CLU_054919_3_2_0"/>
<dbReference type="OrthoDB" id="9806014at2"/>
<dbReference type="Proteomes" id="UP000001029">
    <property type="component" value="Chromosome"/>
</dbReference>
<dbReference type="GO" id="GO:0005737">
    <property type="term" value="C:cytoplasm"/>
    <property type="evidence" value="ECO:0007669"/>
    <property type="project" value="UniProtKB-SubCell"/>
</dbReference>
<dbReference type="GO" id="GO:0043022">
    <property type="term" value="F:ribosome binding"/>
    <property type="evidence" value="ECO:0007669"/>
    <property type="project" value="TreeGrafter"/>
</dbReference>
<dbReference type="GO" id="GO:0003743">
    <property type="term" value="F:translation initiation factor activity"/>
    <property type="evidence" value="ECO:0007669"/>
    <property type="project" value="UniProtKB-UniRule"/>
</dbReference>
<dbReference type="GO" id="GO:0032790">
    <property type="term" value="P:ribosome disassembly"/>
    <property type="evidence" value="ECO:0007669"/>
    <property type="project" value="TreeGrafter"/>
</dbReference>
<dbReference type="FunFam" id="3.10.20.80:FF:000001">
    <property type="entry name" value="Translation initiation factor IF-3"/>
    <property type="match status" value="1"/>
</dbReference>
<dbReference type="Gene3D" id="3.30.110.10">
    <property type="entry name" value="Translation initiation factor 3 (IF-3), C-terminal domain"/>
    <property type="match status" value="1"/>
</dbReference>
<dbReference type="Gene3D" id="3.10.20.80">
    <property type="entry name" value="Translation initiation factor 3 (IF-3), N-terminal domain"/>
    <property type="match status" value="1"/>
</dbReference>
<dbReference type="HAMAP" id="MF_00080">
    <property type="entry name" value="IF_3"/>
    <property type="match status" value="1"/>
</dbReference>
<dbReference type="InterPro" id="IPR036788">
    <property type="entry name" value="T_IF-3_C_sf"/>
</dbReference>
<dbReference type="InterPro" id="IPR036787">
    <property type="entry name" value="T_IF-3_N_sf"/>
</dbReference>
<dbReference type="InterPro" id="IPR019813">
    <property type="entry name" value="Translation_initiation_fac3_CS"/>
</dbReference>
<dbReference type="InterPro" id="IPR001288">
    <property type="entry name" value="Translation_initiation_fac_3"/>
</dbReference>
<dbReference type="InterPro" id="IPR019815">
    <property type="entry name" value="Translation_initiation_fac_3_C"/>
</dbReference>
<dbReference type="InterPro" id="IPR019814">
    <property type="entry name" value="Translation_initiation_fac_3_N"/>
</dbReference>
<dbReference type="NCBIfam" id="TIGR00168">
    <property type="entry name" value="infC"/>
    <property type="match status" value="1"/>
</dbReference>
<dbReference type="PANTHER" id="PTHR10938">
    <property type="entry name" value="TRANSLATION INITIATION FACTOR IF-3"/>
    <property type="match status" value="1"/>
</dbReference>
<dbReference type="PANTHER" id="PTHR10938:SF0">
    <property type="entry name" value="TRANSLATION INITIATION FACTOR IF-3, MITOCHONDRIAL"/>
    <property type="match status" value="1"/>
</dbReference>
<dbReference type="Pfam" id="PF00707">
    <property type="entry name" value="IF3_C"/>
    <property type="match status" value="1"/>
</dbReference>
<dbReference type="Pfam" id="PF05198">
    <property type="entry name" value="IF3_N"/>
    <property type="match status" value="1"/>
</dbReference>
<dbReference type="SUPFAM" id="SSF55200">
    <property type="entry name" value="Translation initiation factor IF3, C-terminal domain"/>
    <property type="match status" value="1"/>
</dbReference>
<dbReference type="SUPFAM" id="SSF54364">
    <property type="entry name" value="Translation initiation factor IF3, N-terminal domain"/>
    <property type="match status" value="1"/>
</dbReference>
<dbReference type="PROSITE" id="PS00938">
    <property type="entry name" value="IF3"/>
    <property type="match status" value="1"/>
</dbReference>
<keyword id="KW-0963">Cytoplasm</keyword>
<keyword id="KW-0396">Initiation factor</keyword>
<keyword id="KW-0648">Protein biosynthesis</keyword>
<keyword id="KW-1185">Reference proteome</keyword>
<evidence type="ECO:0000255" key="1">
    <source>
        <dbReference type="HAMAP-Rule" id="MF_00080"/>
    </source>
</evidence>
<reference key="1">
    <citation type="journal article" date="2009" name="Appl. Environ. Microbiol.">
        <title>Genomic analysis of 'Elusimicrobium minutum,' the first cultivated representative of the phylum 'Elusimicrobia' (formerly termite group 1).</title>
        <authorList>
            <person name="Herlemann D.P.R."/>
            <person name="Geissinger O."/>
            <person name="Ikeda-Ohtsubo W."/>
            <person name="Kunin V."/>
            <person name="Sun H."/>
            <person name="Lapidus A."/>
            <person name="Hugenholtz P."/>
            <person name="Brune A."/>
        </authorList>
    </citation>
    <scope>NUCLEOTIDE SEQUENCE [LARGE SCALE GENOMIC DNA]</scope>
    <source>
        <strain>Pei191</strain>
    </source>
</reference>
<name>IF3_ELUMP</name>
<feature type="chain" id="PRO_1000118268" description="Translation initiation factor IF-3">
    <location>
        <begin position="1"/>
        <end position="177"/>
    </location>
</feature>
<comment type="function">
    <text evidence="1">IF-3 binds to the 30S ribosomal subunit and shifts the equilibrium between 70S ribosomes and their 50S and 30S subunits in favor of the free subunits, thus enhancing the availability of 30S subunits on which protein synthesis initiation begins.</text>
</comment>
<comment type="subunit">
    <text evidence="1">Monomer.</text>
</comment>
<comment type="subcellular location">
    <subcellularLocation>
        <location evidence="1">Cytoplasm</location>
    </subcellularLocation>
</comment>
<comment type="similarity">
    <text evidence="1">Belongs to the IF-3 family.</text>
</comment>
<organism>
    <name type="scientific">Elusimicrobium minutum (strain Pei191)</name>
    <dbReference type="NCBI Taxonomy" id="445932"/>
    <lineage>
        <taxon>Bacteria</taxon>
        <taxon>Pseudomonadati</taxon>
        <taxon>Elusimicrobiota</taxon>
        <taxon>Elusimicrobia</taxon>
        <taxon>Elusimicrobiales</taxon>
        <taxon>Elusimicrobiaceae</taxon>
        <taxon>Elusimicrobium</taxon>
    </lineage>
</organism>
<gene>
    <name evidence="1" type="primary">infC</name>
    <name type="ordered locus">Emin_0346</name>
</gene>
<sequence>MARYEKQEKKDFVRKNEQIRVPQVRLIDSDGTMLGVKSVTEALYLAKQQELDLVEISPTAEPPVCKILDYSKYLYEQGKKLKDAKKKTAKTAMKELRIKSRIASHDLEVKIKHIEDFLKRKDMVRLVVVFHGRENQHRDLGEQMLHDVAKRLEPIANVEGGLQVTGNRMSMIFVPKN</sequence>
<proteinExistence type="inferred from homology"/>
<accession>B2KB83</accession>
<protein>
    <recommendedName>
        <fullName evidence="1">Translation initiation factor IF-3</fullName>
    </recommendedName>
</protein>